<dbReference type="EC" id="6.3.5.7" evidence="1"/>
<dbReference type="EMBL" id="CP000095">
    <property type="protein sequence ID" value="AAZ57756.1"/>
    <property type="molecule type" value="Genomic_DNA"/>
</dbReference>
<dbReference type="RefSeq" id="WP_011293798.1">
    <property type="nucleotide sequence ID" value="NC_007335.2"/>
</dbReference>
<dbReference type="SMR" id="Q46L72"/>
<dbReference type="STRING" id="59920.PMN2A_0264"/>
<dbReference type="KEGG" id="pmn:PMN2A_0264"/>
<dbReference type="HOGENOM" id="CLU_009600_0_3_3"/>
<dbReference type="OrthoDB" id="9811471at2"/>
<dbReference type="PhylomeDB" id="Q46L72"/>
<dbReference type="Proteomes" id="UP000002535">
    <property type="component" value="Chromosome"/>
</dbReference>
<dbReference type="GO" id="GO:0030956">
    <property type="term" value="C:glutamyl-tRNA(Gln) amidotransferase complex"/>
    <property type="evidence" value="ECO:0007669"/>
    <property type="project" value="InterPro"/>
</dbReference>
<dbReference type="GO" id="GO:0005524">
    <property type="term" value="F:ATP binding"/>
    <property type="evidence" value="ECO:0007669"/>
    <property type="project" value="UniProtKB-KW"/>
</dbReference>
<dbReference type="GO" id="GO:0050567">
    <property type="term" value="F:glutaminyl-tRNA synthase (glutamine-hydrolyzing) activity"/>
    <property type="evidence" value="ECO:0007669"/>
    <property type="project" value="UniProtKB-UniRule"/>
</dbReference>
<dbReference type="GO" id="GO:0006412">
    <property type="term" value="P:translation"/>
    <property type="evidence" value="ECO:0007669"/>
    <property type="project" value="UniProtKB-UniRule"/>
</dbReference>
<dbReference type="Gene3D" id="3.90.1300.10">
    <property type="entry name" value="Amidase signature (AS) domain"/>
    <property type="match status" value="1"/>
</dbReference>
<dbReference type="HAMAP" id="MF_00120">
    <property type="entry name" value="GatA"/>
    <property type="match status" value="1"/>
</dbReference>
<dbReference type="InterPro" id="IPR000120">
    <property type="entry name" value="Amidase"/>
</dbReference>
<dbReference type="InterPro" id="IPR020556">
    <property type="entry name" value="Amidase_CS"/>
</dbReference>
<dbReference type="InterPro" id="IPR023631">
    <property type="entry name" value="Amidase_dom"/>
</dbReference>
<dbReference type="InterPro" id="IPR036928">
    <property type="entry name" value="AS_sf"/>
</dbReference>
<dbReference type="InterPro" id="IPR004412">
    <property type="entry name" value="GatA"/>
</dbReference>
<dbReference type="NCBIfam" id="TIGR00132">
    <property type="entry name" value="gatA"/>
    <property type="match status" value="1"/>
</dbReference>
<dbReference type="PANTHER" id="PTHR11895:SF151">
    <property type="entry name" value="GLUTAMYL-TRNA(GLN) AMIDOTRANSFERASE SUBUNIT A"/>
    <property type="match status" value="1"/>
</dbReference>
<dbReference type="PANTHER" id="PTHR11895">
    <property type="entry name" value="TRANSAMIDASE"/>
    <property type="match status" value="1"/>
</dbReference>
<dbReference type="Pfam" id="PF01425">
    <property type="entry name" value="Amidase"/>
    <property type="match status" value="1"/>
</dbReference>
<dbReference type="SUPFAM" id="SSF75304">
    <property type="entry name" value="Amidase signature (AS) enzymes"/>
    <property type="match status" value="1"/>
</dbReference>
<dbReference type="PROSITE" id="PS00571">
    <property type="entry name" value="AMIDASES"/>
    <property type="match status" value="1"/>
</dbReference>
<evidence type="ECO:0000255" key="1">
    <source>
        <dbReference type="HAMAP-Rule" id="MF_00120"/>
    </source>
</evidence>
<gene>
    <name evidence="1" type="primary">gatA</name>
    <name type="ordered locus">PMN2A_0264</name>
</gene>
<proteinExistence type="inferred from homology"/>
<sequence length="486" mass="52096">MTFEDLRQKLKSGEVSSKELVQEKINRINELDPTLNSFLIVNTELALSKAEHIDKQIASGDHLPPLSGIPIAIKDNLCTKGIKTTCASKILDNFVPPYESTVTKKLLNAGAIMIGKTNMDEFAMGSSTETSAFGPTLNPWNITKVPGGSSGGSAASVAAGLCYGSLGSDTGGSIRQPASFCGVVGMKPTYGRVSRWGLIAFASSLDQVGPFANNVSDAAEILQVISGKDELDSTTVDIPVPNYLETLSKSIKGMKIGLIDNCFDHEGLATDVKESVLSSASLLENLGAEIVNISCPRFNDGIATYYVIAPSEASANLARYDGVKYGFRAEDEQSLIEMTSKSRALGFGSEVKRRILIGTYALSAGYVDAYYKKAQQVRTLIRRDFDDAFKKVDVLLAPTAPTTAFGSGDNIDNPMAMYLSDLLTIPANLAGLPAISLPCGFDKYGLPIGLQLIGNVFEEGKLFQVANQFEKAAEVYKNRPKTDFTL</sequence>
<protein>
    <recommendedName>
        <fullName evidence="1">Glutamyl-tRNA(Gln) amidotransferase subunit A</fullName>
        <shortName evidence="1">Glu-ADT subunit A</shortName>
        <ecNumber evidence="1">6.3.5.7</ecNumber>
    </recommendedName>
</protein>
<feature type="chain" id="PRO_0000241133" description="Glutamyl-tRNA(Gln) amidotransferase subunit A">
    <location>
        <begin position="1"/>
        <end position="486"/>
    </location>
</feature>
<feature type="active site" description="Charge relay system" evidence="1">
    <location>
        <position position="74"/>
    </location>
</feature>
<feature type="active site" description="Charge relay system" evidence="1">
    <location>
        <position position="149"/>
    </location>
</feature>
<feature type="active site" description="Acyl-ester intermediate" evidence="1">
    <location>
        <position position="173"/>
    </location>
</feature>
<keyword id="KW-0067">ATP-binding</keyword>
<keyword id="KW-0436">Ligase</keyword>
<keyword id="KW-0547">Nucleotide-binding</keyword>
<keyword id="KW-0648">Protein biosynthesis</keyword>
<keyword id="KW-1185">Reference proteome</keyword>
<reference key="1">
    <citation type="journal article" date="2007" name="PLoS Genet.">
        <title>Patterns and implications of gene gain and loss in the evolution of Prochlorococcus.</title>
        <authorList>
            <person name="Kettler G.C."/>
            <person name="Martiny A.C."/>
            <person name="Huang K."/>
            <person name="Zucker J."/>
            <person name="Coleman M.L."/>
            <person name="Rodrigue S."/>
            <person name="Chen F."/>
            <person name="Lapidus A."/>
            <person name="Ferriera S."/>
            <person name="Johnson J."/>
            <person name="Steglich C."/>
            <person name="Church G.M."/>
            <person name="Richardson P."/>
            <person name="Chisholm S.W."/>
        </authorList>
    </citation>
    <scope>NUCLEOTIDE SEQUENCE [LARGE SCALE GENOMIC DNA]</scope>
    <source>
        <strain>NATL2A</strain>
    </source>
</reference>
<accession>Q46L72</accession>
<comment type="function">
    <text evidence="1">Allows the formation of correctly charged Gln-tRNA(Gln) through the transamidation of misacylated Glu-tRNA(Gln) in organisms which lack glutaminyl-tRNA synthetase. The reaction takes place in the presence of glutamine and ATP through an activated gamma-phospho-Glu-tRNA(Gln).</text>
</comment>
<comment type="catalytic activity">
    <reaction evidence="1">
        <text>L-glutamyl-tRNA(Gln) + L-glutamine + ATP + H2O = L-glutaminyl-tRNA(Gln) + L-glutamate + ADP + phosphate + H(+)</text>
        <dbReference type="Rhea" id="RHEA:17521"/>
        <dbReference type="Rhea" id="RHEA-COMP:9681"/>
        <dbReference type="Rhea" id="RHEA-COMP:9684"/>
        <dbReference type="ChEBI" id="CHEBI:15377"/>
        <dbReference type="ChEBI" id="CHEBI:15378"/>
        <dbReference type="ChEBI" id="CHEBI:29985"/>
        <dbReference type="ChEBI" id="CHEBI:30616"/>
        <dbReference type="ChEBI" id="CHEBI:43474"/>
        <dbReference type="ChEBI" id="CHEBI:58359"/>
        <dbReference type="ChEBI" id="CHEBI:78520"/>
        <dbReference type="ChEBI" id="CHEBI:78521"/>
        <dbReference type="ChEBI" id="CHEBI:456216"/>
        <dbReference type="EC" id="6.3.5.7"/>
    </reaction>
</comment>
<comment type="subunit">
    <text evidence="1">Heterotrimer of A, B and C subunits.</text>
</comment>
<comment type="similarity">
    <text evidence="1">Belongs to the amidase family. GatA subfamily.</text>
</comment>
<organism>
    <name type="scientific">Prochlorococcus marinus (strain NATL2A)</name>
    <dbReference type="NCBI Taxonomy" id="59920"/>
    <lineage>
        <taxon>Bacteria</taxon>
        <taxon>Bacillati</taxon>
        <taxon>Cyanobacteriota</taxon>
        <taxon>Cyanophyceae</taxon>
        <taxon>Synechococcales</taxon>
        <taxon>Prochlorococcaceae</taxon>
        <taxon>Prochlorococcus</taxon>
    </lineage>
</organism>
<name>GATA_PROMT</name>